<proteinExistence type="inferred from homology"/>
<accession>D2VS83</accession>
<protein>
    <recommendedName>
        <fullName>Spastin</fullName>
        <ecNumber evidence="1">5.6.1.1</ecNumber>
    </recommendedName>
</protein>
<reference key="1">
    <citation type="journal article" date="2010" name="Cell">
        <title>The genome of Naegleria gruberi illuminates early eukaryotic versatility.</title>
        <authorList>
            <person name="Fritz-Laylin L.K."/>
            <person name="Prochnik S.E."/>
            <person name="Ginger M.L."/>
            <person name="Dacks J.B."/>
            <person name="Carpenter M.L."/>
            <person name="Field M.C."/>
            <person name="Kuo A."/>
            <person name="Paredez A."/>
            <person name="Chapman J."/>
            <person name="Pham J."/>
            <person name="Shu S."/>
            <person name="Neupane R."/>
            <person name="Cipriano M."/>
            <person name="Mancuso J."/>
            <person name="Tu H."/>
            <person name="Salamov A."/>
            <person name="Lindquist E."/>
            <person name="Shapiro H."/>
            <person name="Lucas S."/>
            <person name="Grigoriev I.V."/>
            <person name="Cande W.Z."/>
            <person name="Fulton C."/>
            <person name="Rokhsar D.S."/>
            <person name="Dawson S.C."/>
        </authorList>
    </citation>
    <scope>NUCLEOTIDE SEQUENCE [LARGE SCALE GENOMIC DNA]</scope>
    <source>
        <strain>ATCC 30224 / NEG-M</strain>
    </source>
</reference>
<name>SPAST_NAEGR</name>
<gene>
    <name type="ORF">NAEGRDRAFT_83257</name>
</gene>
<feature type="chain" id="PRO_0000461950" description="Spastin">
    <location>
        <begin position="1"/>
        <end position="523"/>
    </location>
</feature>
<feature type="topological domain" description="Cytoplasmic" evidence="3">
    <location>
        <begin position="1"/>
        <end position="41"/>
    </location>
</feature>
<feature type="intramembrane region" description="Helical">
    <location>
        <begin position="42"/>
        <end position="58"/>
    </location>
</feature>
<feature type="topological domain" description="Cytoplasmic" evidence="3">
    <location>
        <begin position="59"/>
        <end position="523"/>
    </location>
</feature>
<feature type="region of interest" description="Disordered" evidence="2">
    <location>
        <begin position="57"/>
        <end position="77"/>
    </location>
</feature>
<feature type="region of interest" description="Disordered" evidence="2">
    <location>
        <begin position="129"/>
        <end position="218"/>
    </location>
</feature>
<feature type="compositionally biased region" description="Low complexity" evidence="2">
    <location>
        <begin position="57"/>
        <end position="71"/>
    </location>
</feature>
<feature type="compositionally biased region" description="Low complexity" evidence="2">
    <location>
        <begin position="171"/>
        <end position="184"/>
    </location>
</feature>
<feature type="compositionally biased region" description="Low complexity" evidence="2">
    <location>
        <begin position="193"/>
        <end position="210"/>
    </location>
</feature>
<organism>
    <name type="scientific">Naegleria gruberi</name>
    <name type="common">Amoeba</name>
    <dbReference type="NCBI Taxonomy" id="5762"/>
    <lineage>
        <taxon>Eukaryota</taxon>
        <taxon>Discoba</taxon>
        <taxon>Heterolobosea</taxon>
        <taxon>Tetramitia</taxon>
        <taxon>Eutetramitia</taxon>
        <taxon>Vahlkampfiidae</taxon>
        <taxon>Naegleria</taxon>
    </lineage>
</organism>
<evidence type="ECO:0000250" key="1">
    <source>
        <dbReference type="UniProtKB" id="Q9UBP0"/>
    </source>
</evidence>
<evidence type="ECO:0000256" key="2">
    <source>
        <dbReference type="SAM" id="MobiDB-lite"/>
    </source>
</evidence>
<evidence type="ECO:0000305" key="3"/>
<dbReference type="EC" id="5.6.1.1" evidence="1"/>
<dbReference type="EMBL" id="GG738893">
    <property type="protein sequence ID" value="EFC40297.1"/>
    <property type="status" value="ALT_SEQ"/>
    <property type="molecule type" value="Genomic_DNA"/>
</dbReference>
<dbReference type="STRING" id="5762.D2VS83"/>
<dbReference type="EnsemblProtists" id="EFC40297">
    <property type="protein sequence ID" value="EFC40297"/>
    <property type="gene ID" value="NAEGRDRAFT_83257"/>
</dbReference>
<dbReference type="VEuPathDB" id="AmoebaDB:NAEGRDRAFT_83257"/>
<dbReference type="eggNOG" id="KOG0740">
    <property type="taxonomic scope" value="Eukaryota"/>
</dbReference>
<dbReference type="InParanoid" id="D2VS83"/>
<dbReference type="OMA" id="TDINKIC"/>
<dbReference type="OrthoDB" id="276256at2759"/>
<dbReference type="Proteomes" id="UP000006671">
    <property type="component" value="Unassembled WGS sequence"/>
</dbReference>
<dbReference type="GO" id="GO:0005737">
    <property type="term" value="C:cytoplasm"/>
    <property type="evidence" value="ECO:0007669"/>
    <property type="project" value="UniProtKB-KW"/>
</dbReference>
<dbReference type="GO" id="GO:0016020">
    <property type="term" value="C:membrane"/>
    <property type="evidence" value="ECO:0007669"/>
    <property type="project" value="UniProtKB-SubCell"/>
</dbReference>
<dbReference type="GO" id="GO:0005874">
    <property type="term" value="C:microtubule"/>
    <property type="evidence" value="ECO:0007669"/>
    <property type="project" value="UniProtKB-KW"/>
</dbReference>
<dbReference type="GO" id="GO:0005524">
    <property type="term" value="F:ATP binding"/>
    <property type="evidence" value="ECO:0007669"/>
    <property type="project" value="UniProtKB-KW"/>
</dbReference>
<dbReference type="GO" id="GO:0016887">
    <property type="term" value="F:ATP hydrolysis activity"/>
    <property type="evidence" value="ECO:0007669"/>
    <property type="project" value="InterPro"/>
</dbReference>
<dbReference type="GO" id="GO:0016853">
    <property type="term" value="F:isomerase activity"/>
    <property type="evidence" value="ECO:0007669"/>
    <property type="project" value="UniProtKB-KW"/>
</dbReference>
<dbReference type="GO" id="GO:0000226">
    <property type="term" value="P:microtubule cytoskeleton organization"/>
    <property type="evidence" value="ECO:0007669"/>
    <property type="project" value="UniProtKB-ARBA"/>
</dbReference>
<dbReference type="CDD" id="cd19509">
    <property type="entry name" value="RecA-like_VPS4-like"/>
    <property type="match status" value="1"/>
</dbReference>
<dbReference type="Gene3D" id="1.10.8.60">
    <property type="match status" value="1"/>
</dbReference>
<dbReference type="Gene3D" id="3.40.50.300">
    <property type="entry name" value="P-loop containing nucleotide triphosphate hydrolases"/>
    <property type="match status" value="1"/>
</dbReference>
<dbReference type="InterPro" id="IPR003593">
    <property type="entry name" value="AAA+_ATPase"/>
</dbReference>
<dbReference type="InterPro" id="IPR041569">
    <property type="entry name" value="AAA_lid_3"/>
</dbReference>
<dbReference type="InterPro" id="IPR003959">
    <property type="entry name" value="ATPase_AAA_core"/>
</dbReference>
<dbReference type="InterPro" id="IPR003960">
    <property type="entry name" value="ATPase_AAA_CS"/>
</dbReference>
<dbReference type="InterPro" id="IPR050304">
    <property type="entry name" value="MT-severing_AAA_ATPase"/>
</dbReference>
<dbReference type="InterPro" id="IPR027417">
    <property type="entry name" value="P-loop_NTPase"/>
</dbReference>
<dbReference type="InterPro" id="IPR015415">
    <property type="entry name" value="Spast_Vps4_C"/>
</dbReference>
<dbReference type="PANTHER" id="PTHR23074">
    <property type="entry name" value="AAA DOMAIN-CONTAINING"/>
    <property type="match status" value="1"/>
</dbReference>
<dbReference type="PANTHER" id="PTHR23074:SF86">
    <property type="entry name" value="SPASTIN"/>
    <property type="match status" value="1"/>
</dbReference>
<dbReference type="Pfam" id="PF00004">
    <property type="entry name" value="AAA"/>
    <property type="match status" value="1"/>
</dbReference>
<dbReference type="Pfam" id="PF17862">
    <property type="entry name" value="AAA_lid_3"/>
    <property type="match status" value="1"/>
</dbReference>
<dbReference type="Pfam" id="PF09336">
    <property type="entry name" value="Vps4_C"/>
    <property type="match status" value="1"/>
</dbReference>
<dbReference type="SMART" id="SM00382">
    <property type="entry name" value="AAA"/>
    <property type="match status" value="1"/>
</dbReference>
<dbReference type="SUPFAM" id="SSF52540">
    <property type="entry name" value="P-loop containing nucleoside triphosphate hydrolases"/>
    <property type="match status" value="1"/>
</dbReference>
<dbReference type="PROSITE" id="PS00674">
    <property type="entry name" value="AAA"/>
    <property type="match status" value="1"/>
</dbReference>
<sequence length="523" mass="58079">MLDKLSKHKTMFYERVKEIDQILFSQQQAKQTQLDNLSNNNASGGFFSGFMKMFSPLSTPPNSSSNNNSNTQQAISQETRKLCSVNNNRHEPIYNQYTTNSQVIRSFPAVSSIGQSSTNMYNSVNICDGISSSEKRSPTPPRNRSNSNDKILFGHYDALGSLPQNNMGHYQQPPQQSSQQQQQPLVPKQNSVTALRNTTSATSSTTTANNKKPSLDQIPELKGVDRKLLDHILNEVIETKTTNWDDIAGLKDAKQTLLETVILPSIRPDLFNGLRAPCRGILLFGPPGTGKTMIARACASQCNATFFSISAGSLVSKYHGEGEKLVRCLFAAARYLQPSVIFIDEIDSILSARSSEEHEASRRMKTEFMIQMDGVSNMNGKEDRVLVMGATNIPTELDEAILRRFTKRIYIPLPDHAARASLIKQLSHGQNMSLSETDINKICVATEGFSGSDLTALCKETSMVPLREISMDQLISIDARKIRPIVLKDFQSSLVHVRPSTSQDTIKKLEKWNESYGTFAKGI</sequence>
<keyword id="KW-0021">Allosteric enzyme</keyword>
<keyword id="KW-0067">ATP-binding</keyword>
<keyword id="KW-0413">Isomerase</keyword>
<keyword id="KW-0472">Membrane</keyword>
<keyword id="KW-0493">Microtubule</keyword>
<keyword id="KW-0547">Nucleotide-binding</keyword>
<keyword id="KW-1185">Reference proteome</keyword>
<comment type="function">
    <text evidence="1">ATP-dependent microtubule severing protein (By similarity). Stimulates microtubule minus-end depolymerization and poleward microtubule flux in the mitotic spindle (By similarity).</text>
</comment>
<comment type="catalytic activity">
    <reaction evidence="1">
        <text>n ATP + n H2O + a microtubule = n ADP + n phosphate + (n+1) alpha/beta tubulin heterodimers.</text>
        <dbReference type="EC" id="5.6.1.1"/>
    </reaction>
</comment>
<comment type="subunit">
    <text evidence="1">Homohexamer. The homohexamer is stabilized by ATP-binding (By similarity). The homohexamer may adopt a ring conformation through which microtubules pass prior to being severed (By similarity).</text>
</comment>
<comment type="subcellular location">
    <subcellularLocation>
        <location evidence="1">Membrane</location>
        <topology evidence="1">Peripheral membrane protein</topology>
    </subcellularLocation>
    <text evidence="1">Forms a intramembrane hairpin-like structure in the membrane.</text>
</comment>
<comment type="similarity">
    <text evidence="3">Belongs to the AAA ATPase family. Spastin subfamily.</text>
</comment>
<comment type="sequence caution" evidence="3">
    <conflict type="erroneous gene model prediction">
        <sequence resource="EMBL-CDS" id="EFC40297"/>
    </conflict>
</comment>